<gene>
    <name evidence="1" type="primary">frr</name>
    <name type="ordered locus">STER_0475</name>
</gene>
<protein>
    <recommendedName>
        <fullName evidence="1">Ribosome-recycling factor</fullName>
        <shortName evidence="1">RRF</shortName>
    </recommendedName>
    <alternativeName>
        <fullName evidence="1">Ribosome-releasing factor</fullName>
    </alternativeName>
</protein>
<accession>Q03M15</accession>
<organism>
    <name type="scientific">Streptococcus thermophilus (strain ATCC BAA-491 / LMD-9)</name>
    <dbReference type="NCBI Taxonomy" id="322159"/>
    <lineage>
        <taxon>Bacteria</taxon>
        <taxon>Bacillati</taxon>
        <taxon>Bacillota</taxon>
        <taxon>Bacilli</taxon>
        <taxon>Lactobacillales</taxon>
        <taxon>Streptococcaceae</taxon>
        <taxon>Streptococcus</taxon>
    </lineage>
</organism>
<evidence type="ECO:0000255" key="1">
    <source>
        <dbReference type="HAMAP-Rule" id="MF_00040"/>
    </source>
</evidence>
<reference key="1">
    <citation type="journal article" date="2006" name="Proc. Natl. Acad. Sci. U.S.A.">
        <title>Comparative genomics of the lactic acid bacteria.</title>
        <authorList>
            <person name="Makarova K.S."/>
            <person name="Slesarev A."/>
            <person name="Wolf Y.I."/>
            <person name="Sorokin A."/>
            <person name="Mirkin B."/>
            <person name="Koonin E.V."/>
            <person name="Pavlov A."/>
            <person name="Pavlova N."/>
            <person name="Karamychev V."/>
            <person name="Polouchine N."/>
            <person name="Shakhova V."/>
            <person name="Grigoriev I."/>
            <person name="Lou Y."/>
            <person name="Rohksar D."/>
            <person name="Lucas S."/>
            <person name="Huang K."/>
            <person name="Goodstein D.M."/>
            <person name="Hawkins T."/>
            <person name="Plengvidhya V."/>
            <person name="Welker D."/>
            <person name="Hughes J."/>
            <person name="Goh Y."/>
            <person name="Benson A."/>
            <person name="Baldwin K."/>
            <person name="Lee J.-H."/>
            <person name="Diaz-Muniz I."/>
            <person name="Dosti B."/>
            <person name="Smeianov V."/>
            <person name="Wechter W."/>
            <person name="Barabote R."/>
            <person name="Lorca G."/>
            <person name="Altermann E."/>
            <person name="Barrangou R."/>
            <person name="Ganesan B."/>
            <person name="Xie Y."/>
            <person name="Rawsthorne H."/>
            <person name="Tamir D."/>
            <person name="Parker C."/>
            <person name="Breidt F."/>
            <person name="Broadbent J.R."/>
            <person name="Hutkins R."/>
            <person name="O'Sullivan D."/>
            <person name="Steele J."/>
            <person name="Unlu G."/>
            <person name="Saier M.H. Jr."/>
            <person name="Klaenhammer T."/>
            <person name="Richardson P."/>
            <person name="Kozyavkin S."/>
            <person name="Weimer B.C."/>
            <person name="Mills D.A."/>
        </authorList>
    </citation>
    <scope>NUCLEOTIDE SEQUENCE [LARGE SCALE GENOMIC DNA]</scope>
    <source>
        <strain>ATCC BAA-491 / LMD-9</strain>
    </source>
</reference>
<dbReference type="EMBL" id="CP000419">
    <property type="protein sequence ID" value="ABJ65757.1"/>
    <property type="molecule type" value="Genomic_DNA"/>
</dbReference>
<dbReference type="RefSeq" id="WP_002949868.1">
    <property type="nucleotide sequence ID" value="NZ_CP086001.1"/>
</dbReference>
<dbReference type="SMR" id="Q03M15"/>
<dbReference type="KEGG" id="ste:STER_0475"/>
<dbReference type="HOGENOM" id="CLU_073981_2_0_9"/>
<dbReference type="GO" id="GO:0005737">
    <property type="term" value="C:cytoplasm"/>
    <property type="evidence" value="ECO:0007669"/>
    <property type="project" value="UniProtKB-SubCell"/>
</dbReference>
<dbReference type="GO" id="GO:0043023">
    <property type="term" value="F:ribosomal large subunit binding"/>
    <property type="evidence" value="ECO:0007669"/>
    <property type="project" value="TreeGrafter"/>
</dbReference>
<dbReference type="GO" id="GO:0006415">
    <property type="term" value="P:translational termination"/>
    <property type="evidence" value="ECO:0007669"/>
    <property type="project" value="UniProtKB-UniRule"/>
</dbReference>
<dbReference type="CDD" id="cd00520">
    <property type="entry name" value="RRF"/>
    <property type="match status" value="1"/>
</dbReference>
<dbReference type="FunFam" id="1.10.132.20:FF:000001">
    <property type="entry name" value="Ribosome-recycling factor"/>
    <property type="match status" value="1"/>
</dbReference>
<dbReference type="FunFam" id="3.30.1360.40:FF:000001">
    <property type="entry name" value="Ribosome-recycling factor"/>
    <property type="match status" value="1"/>
</dbReference>
<dbReference type="Gene3D" id="3.30.1360.40">
    <property type="match status" value="1"/>
</dbReference>
<dbReference type="Gene3D" id="1.10.132.20">
    <property type="entry name" value="Ribosome-recycling factor"/>
    <property type="match status" value="1"/>
</dbReference>
<dbReference type="HAMAP" id="MF_00040">
    <property type="entry name" value="RRF"/>
    <property type="match status" value="1"/>
</dbReference>
<dbReference type="InterPro" id="IPR002661">
    <property type="entry name" value="Ribosome_recyc_fac"/>
</dbReference>
<dbReference type="InterPro" id="IPR023584">
    <property type="entry name" value="Ribosome_recyc_fac_dom"/>
</dbReference>
<dbReference type="InterPro" id="IPR036191">
    <property type="entry name" value="RRF_sf"/>
</dbReference>
<dbReference type="NCBIfam" id="TIGR00496">
    <property type="entry name" value="frr"/>
    <property type="match status" value="1"/>
</dbReference>
<dbReference type="PANTHER" id="PTHR20982:SF3">
    <property type="entry name" value="MITOCHONDRIAL RIBOSOME RECYCLING FACTOR PSEUDO 1"/>
    <property type="match status" value="1"/>
</dbReference>
<dbReference type="PANTHER" id="PTHR20982">
    <property type="entry name" value="RIBOSOME RECYCLING FACTOR"/>
    <property type="match status" value="1"/>
</dbReference>
<dbReference type="Pfam" id="PF01765">
    <property type="entry name" value="RRF"/>
    <property type="match status" value="1"/>
</dbReference>
<dbReference type="SUPFAM" id="SSF55194">
    <property type="entry name" value="Ribosome recycling factor, RRF"/>
    <property type="match status" value="1"/>
</dbReference>
<proteinExistence type="inferred from homology"/>
<sequence>MTNAIIEKAKERFAHTHESLAREFGAIRAGRANASLLDRITVEYYGAPTPLNQLASITVPEARVLLISPFDKGSIADIERAINESDLGINPANDGSVIRLVIPALTEETRKELAKEVKKVGENAKIAIRNIRRDAMDEAKKQEKEKEITEDQLKTLEKDIQKATDDAVNKIDSMIAEKEKELLTV</sequence>
<keyword id="KW-0963">Cytoplasm</keyword>
<keyword id="KW-0648">Protein biosynthesis</keyword>
<name>RRF_STRTD</name>
<feature type="chain" id="PRO_1000003292" description="Ribosome-recycling factor">
    <location>
        <begin position="1"/>
        <end position="185"/>
    </location>
</feature>
<comment type="function">
    <text evidence="1">Responsible for the release of ribosomes from messenger RNA at the termination of protein biosynthesis. May increase the efficiency of translation by recycling ribosomes from one round of translation to another.</text>
</comment>
<comment type="subcellular location">
    <subcellularLocation>
        <location evidence="1">Cytoplasm</location>
    </subcellularLocation>
</comment>
<comment type="similarity">
    <text evidence="1">Belongs to the RRF family.</text>
</comment>